<dbReference type="EMBL" id="CH408161">
    <property type="protein sequence ID" value="EDK41158.2"/>
    <property type="molecule type" value="Genomic_DNA"/>
</dbReference>
<dbReference type="RefSeq" id="XP_001482236.1">
    <property type="nucleotide sequence ID" value="XM_001482186.1"/>
</dbReference>
<dbReference type="SMR" id="A5DPQ5"/>
<dbReference type="FunCoup" id="A5DPQ5">
    <property type="interactions" value="1174"/>
</dbReference>
<dbReference type="STRING" id="294746.A5DPQ5"/>
<dbReference type="GeneID" id="5124234"/>
<dbReference type="KEGG" id="pgu:PGUG_05256"/>
<dbReference type="eggNOG" id="KOG1076">
    <property type="taxonomic scope" value="Eukaryota"/>
</dbReference>
<dbReference type="HOGENOM" id="CLU_004304_0_2_1"/>
<dbReference type="InParanoid" id="A5DPQ5"/>
<dbReference type="OMA" id="FRCGLIK"/>
<dbReference type="OrthoDB" id="29647at2759"/>
<dbReference type="Proteomes" id="UP000001997">
    <property type="component" value="Unassembled WGS sequence"/>
</dbReference>
<dbReference type="GO" id="GO:0010494">
    <property type="term" value="C:cytoplasmic stress granule"/>
    <property type="evidence" value="ECO:0007669"/>
    <property type="project" value="EnsemblFungi"/>
</dbReference>
<dbReference type="GO" id="GO:0016282">
    <property type="term" value="C:eukaryotic 43S preinitiation complex"/>
    <property type="evidence" value="ECO:0007669"/>
    <property type="project" value="UniProtKB-UniRule"/>
</dbReference>
<dbReference type="GO" id="GO:0033290">
    <property type="term" value="C:eukaryotic 48S preinitiation complex"/>
    <property type="evidence" value="ECO:0007669"/>
    <property type="project" value="UniProtKB-UniRule"/>
</dbReference>
<dbReference type="GO" id="GO:0071540">
    <property type="term" value="C:eukaryotic translation initiation factor 3 complex, eIF3e"/>
    <property type="evidence" value="ECO:0007669"/>
    <property type="project" value="EnsemblFungi"/>
</dbReference>
<dbReference type="GO" id="GO:0071541">
    <property type="term" value="C:eukaryotic translation initiation factor 3 complex, eIF3m"/>
    <property type="evidence" value="ECO:0007669"/>
    <property type="project" value="EnsemblFungi"/>
</dbReference>
<dbReference type="GO" id="GO:0043614">
    <property type="term" value="C:multi-eIF complex"/>
    <property type="evidence" value="ECO:0007669"/>
    <property type="project" value="EnsemblFungi"/>
</dbReference>
<dbReference type="GO" id="GO:0008541">
    <property type="term" value="C:proteasome regulatory particle, lid subcomplex"/>
    <property type="evidence" value="ECO:0007669"/>
    <property type="project" value="UniProtKB-ARBA"/>
</dbReference>
<dbReference type="GO" id="GO:0003723">
    <property type="term" value="F:RNA binding"/>
    <property type="evidence" value="ECO:0007669"/>
    <property type="project" value="InterPro"/>
</dbReference>
<dbReference type="GO" id="GO:0003743">
    <property type="term" value="F:translation initiation factor activity"/>
    <property type="evidence" value="ECO:0007669"/>
    <property type="project" value="UniProtKB-UniRule"/>
</dbReference>
<dbReference type="GO" id="GO:0031369">
    <property type="term" value="F:translation initiation factor binding"/>
    <property type="evidence" value="ECO:0007669"/>
    <property type="project" value="EnsemblFungi"/>
</dbReference>
<dbReference type="GO" id="GO:0001732">
    <property type="term" value="P:formation of cytoplasmic translation initiation complex"/>
    <property type="evidence" value="ECO:0007669"/>
    <property type="project" value="UniProtKB-UniRule"/>
</dbReference>
<dbReference type="HAMAP" id="MF_03002">
    <property type="entry name" value="eIF3c"/>
    <property type="match status" value="1"/>
</dbReference>
<dbReference type="InterPro" id="IPR027516">
    <property type="entry name" value="EIF3C"/>
</dbReference>
<dbReference type="InterPro" id="IPR008905">
    <property type="entry name" value="EIF3C_N_dom"/>
</dbReference>
<dbReference type="InterPro" id="IPR000717">
    <property type="entry name" value="PCI_dom"/>
</dbReference>
<dbReference type="InterPro" id="IPR036390">
    <property type="entry name" value="WH_DNA-bd_sf"/>
</dbReference>
<dbReference type="PANTHER" id="PTHR13937">
    <property type="entry name" value="EUKARYOTIC TRANSLATION INITATION FACTOR 3, SUBUNIT 8 EIF3S8 -RELATED"/>
    <property type="match status" value="1"/>
</dbReference>
<dbReference type="PANTHER" id="PTHR13937:SF0">
    <property type="entry name" value="EUKARYOTIC TRANSLATION INITIATION FACTOR 3 SUBUNIT C-RELATED"/>
    <property type="match status" value="1"/>
</dbReference>
<dbReference type="Pfam" id="PF05470">
    <property type="entry name" value="eIF-3c_N"/>
    <property type="match status" value="2"/>
</dbReference>
<dbReference type="Pfam" id="PF01399">
    <property type="entry name" value="PCI"/>
    <property type="match status" value="1"/>
</dbReference>
<dbReference type="SMART" id="SM00088">
    <property type="entry name" value="PINT"/>
    <property type="match status" value="1"/>
</dbReference>
<dbReference type="SUPFAM" id="SSF46785">
    <property type="entry name" value="Winged helix' DNA-binding domain"/>
    <property type="match status" value="1"/>
</dbReference>
<dbReference type="PROSITE" id="PS50250">
    <property type="entry name" value="PCI"/>
    <property type="match status" value="1"/>
</dbReference>
<protein>
    <recommendedName>
        <fullName evidence="1">Eukaryotic translation initiation factor 3 subunit C</fullName>
        <shortName evidence="1">eIF3c</shortName>
    </recommendedName>
    <alternativeName>
        <fullName evidence="1">Eukaryotic translation initiation factor 3 93 kDa subunit homolog</fullName>
        <shortName evidence="1">eIF3 p93</shortName>
    </alternativeName>
    <alternativeName>
        <fullName evidence="1">Translation initiation factor eIF3, p93 subunit homolog</fullName>
    </alternativeName>
</protein>
<proteinExistence type="inferred from homology"/>
<accession>A5DPQ5</accession>
<name>EIF3C_PICGU</name>
<organism>
    <name type="scientific">Meyerozyma guilliermondii (strain ATCC 6260 / CBS 566 / DSM 6381 / JCM 1539 / NBRC 10279 / NRRL Y-324)</name>
    <name type="common">Yeast</name>
    <name type="synonym">Candida guilliermondii</name>
    <dbReference type="NCBI Taxonomy" id="294746"/>
    <lineage>
        <taxon>Eukaryota</taxon>
        <taxon>Fungi</taxon>
        <taxon>Dikarya</taxon>
        <taxon>Ascomycota</taxon>
        <taxon>Saccharomycotina</taxon>
        <taxon>Pichiomycetes</taxon>
        <taxon>Debaryomycetaceae</taxon>
        <taxon>Meyerozyma</taxon>
    </lineage>
</organism>
<keyword id="KW-0963">Cytoplasm</keyword>
<keyword id="KW-0396">Initiation factor</keyword>
<keyword id="KW-0648">Protein biosynthesis</keyword>
<keyword id="KW-1185">Reference proteome</keyword>
<reference key="1">
    <citation type="journal article" date="2009" name="Nature">
        <title>Evolution of pathogenicity and sexual reproduction in eight Candida genomes.</title>
        <authorList>
            <person name="Butler G."/>
            <person name="Rasmussen M.D."/>
            <person name="Lin M.F."/>
            <person name="Santos M.A.S."/>
            <person name="Sakthikumar S."/>
            <person name="Munro C.A."/>
            <person name="Rheinbay E."/>
            <person name="Grabherr M."/>
            <person name="Forche A."/>
            <person name="Reedy J.L."/>
            <person name="Agrafioti I."/>
            <person name="Arnaud M.B."/>
            <person name="Bates S."/>
            <person name="Brown A.J.P."/>
            <person name="Brunke S."/>
            <person name="Costanzo M.C."/>
            <person name="Fitzpatrick D.A."/>
            <person name="de Groot P.W.J."/>
            <person name="Harris D."/>
            <person name="Hoyer L.L."/>
            <person name="Hube B."/>
            <person name="Klis F.M."/>
            <person name="Kodira C."/>
            <person name="Lennard N."/>
            <person name="Logue M.E."/>
            <person name="Martin R."/>
            <person name="Neiman A.M."/>
            <person name="Nikolaou E."/>
            <person name="Quail M.A."/>
            <person name="Quinn J."/>
            <person name="Santos M.C."/>
            <person name="Schmitzberger F.F."/>
            <person name="Sherlock G."/>
            <person name="Shah P."/>
            <person name="Silverstein K.A.T."/>
            <person name="Skrzypek M.S."/>
            <person name="Soll D."/>
            <person name="Staggs R."/>
            <person name="Stansfield I."/>
            <person name="Stumpf M.P.H."/>
            <person name="Sudbery P.E."/>
            <person name="Srikantha T."/>
            <person name="Zeng Q."/>
            <person name="Berman J."/>
            <person name="Berriman M."/>
            <person name="Heitman J."/>
            <person name="Gow N.A.R."/>
            <person name="Lorenz M.C."/>
            <person name="Birren B.W."/>
            <person name="Kellis M."/>
            <person name="Cuomo C.A."/>
        </authorList>
    </citation>
    <scope>NUCLEOTIDE SEQUENCE [LARGE SCALE GENOMIC DNA]</scope>
    <source>
        <strain>ATCC 6260 / CBS 566 / DSM 6381 / JCM 1539 / NBRC 10279 / NRRL Y-324</strain>
    </source>
</reference>
<evidence type="ECO:0000255" key="1">
    <source>
        <dbReference type="HAMAP-Rule" id="MF_03002"/>
    </source>
</evidence>
<evidence type="ECO:0000255" key="2">
    <source>
        <dbReference type="PROSITE-ProRule" id="PRU01185"/>
    </source>
</evidence>
<evidence type="ECO:0000256" key="3">
    <source>
        <dbReference type="SAM" id="MobiDB-lite"/>
    </source>
</evidence>
<gene>
    <name evidence="1" type="primary">NIP1</name>
    <name type="ORF">PGUG_05256</name>
</gene>
<comment type="function">
    <text evidence="1">Component of the eukaryotic translation initiation factor 3 (eIF-3) complex, which is involved in protein synthesis of a specialized repertoire of mRNAs and, together with other initiation factors, stimulates binding of mRNA and methionyl-tRNAi to the 40S ribosome. The eIF-3 complex specifically targets and initiates translation of a subset of mRNAs involved in cell proliferation.</text>
</comment>
<comment type="subunit">
    <text evidence="1">Component of the eukaryotic translation initiation factor 3 (eIF-3) complex.</text>
</comment>
<comment type="subcellular location">
    <subcellularLocation>
        <location evidence="1">Cytoplasm</location>
    </subcellularLocation>
</comment>
<comment type="similarity">
    <text evidence="1">Belongs to the eIF-3 subunit C family.</text>
</comment>
<feature type="chain" id="PRO_0000366883" description="Eukaryotic translation initiation factor 3 subunit C">
    <location>
        <begin position="1"/>
        <end position="836"/>
    </location>
</feature>
<feature type="domain" description="PCI" evidence="2">
    <location>
        <begin position="586"/>
        <end position="761"/>
    </location>
</feature>
<feature type="region of interest" description="Disordered" evidence="3">
    <location>
        <begin position="1"/>
        <end position="97"/>
    </location>
</feature>
<feature type="region of interest" description="Disordered" evidence="3">
    <location>
        <begin position="783"/>
        <end position="817"/>
    </location>
</feature>
<feature type="compositionally biased region" description="Acidic residues" evidence="3">
    <location>
        <begin position="13"/>
        <end position="55"/>
    </location>
</feature>
<feature type="compositionally biased region" description="Basic and acidic residues" evidence="3">
    <location>
        <begin position="86"/>
        <end position="97"/>
    </location>
</feature>
<feature type="compositionally biased region" description="Low complexity" evidence="3">
    <location>
        <begin position="797"/>
        <end position="806"/>
    </location>
</feature>
<feature type="compositionally biased region" description="Basic and acidic residues" evidence="3">
    <location>
        <begin position="807"/>
        <end position="817"/>
    </location>
</feature>
<sequence length="836" mass="95072">MSRFFVSGYDSESSSEEEDLLTSSEEELMSSEQESDSEFDDEFANDDDSDSSDSDSDGRPSGPAYFLKSSFRKGAGGDSDSDSEDEGRRVVKSAKEKLTDDMKDAVEAVNSAKRQENWISALTEFERLGRLLVRAGQQGFGTPNFYIKCLVDLEAYLIETTANEKESTRKMNANLARAFTSLKQRVKKQVKEFSHLVELYKSEPELFDKEEPVETIEKDAEIQATPLASSTGRALSPVFATLKSVAETRGKKNIDKFEQVQILEDLLEEVSPKGSPFEIISIYQMLLSIRFDASSHHAFMPLDQWQKNKDTLNDLLDFLEKHSNEYQVSELGTASDDIDLEPPANADGIRILPGSVTSHIERLDDEFIRYLQNTDPHSLEYIDRLKDEKDTYNLVVRGQLYVEKTTPDHVRGTYQGEQLARIVMRRMNHIYYKPDQLIKANESEAWRHLSGDSQIVAKNSEPKDVINGLAEFLSKQDGAIYPKGALLFSVYYHAVNNDYSVARDMFLSSQVHQGINNADSSIQVLYNRAMVQLGLSAFRYGNIEESHQALNEIANSQRLKELLGQGFNSKYPSQATVAEKQRLLPFHMHINLELLECVFMTCSLLIEIPQLAAASNSTKESRRKTNIKSFKSKLEFHDRQYFTGPPESIKDHIVHASISLQKGDWHNAYKLLSTIKIWKLLPNNDQLLEMMRGKLQVEGLRTYIFTYKSIYTKLSVVKLAKIFDINEEEVLSIVDKMISSGEVSASLSDDKKSINFVSSEHLQRTRLQELAIVMNEKIGLLTDKNEKTASNGHGRKTTQQQQQQQQKEQREQTHDENIKFRYANVNTNNDEFQTIA</sequence>